<sequence>MIRVGINGYGTIGKRVADAVAAQPDMTVAGVAKTSPNFEATQARKRGFDLYTAVEDRADQFPAAGIETAGPVDDLIADSDVVVDATPSGVGAENRSRYAAHDTPAIYQGGEDASVADVSFNARANFEAAADADHVRVVSCNTTGLSRLLAPLREQYGIEKVRATLVRRGGDPGQTDRGPINDILPDPITIPSHHGPDVNTIFPDLDIDTLGMKVPATLMHMHSINVTLERDPDAADVRDVLAGQSRIMLLDDDLGIDGTGPLKEYAQDMGRPRGDLWENCLWGESVTMDGRDFYCFQAIHQESDVVPENVDAVRAIAGDADAAESIATTNDALGI</sequence>
<accession>B0R2M2</accession>
<proteinExistence type="inferred from homology"/>
<gene>
    <name evidence="1" type="primary">gap</name>
    <name type="ordered locus">OE_1154F</name>
</gene>
<dbReference type="EC" id="1.2.1.59" evidence="1"/>
<dbReference type="EMBL" id="AM774415">
    <property type="protein sequence ID" value="CAP12976.1"/>
    <property type="molecule type" value="Genomic_DNA"/>
</dbReference>
<dbReference type="RefSeq" id="WP_010902020.1">
    <property type="nucleotide sequence ID" value="NC_010364.1"/>
</dbReference>
<dbReference type="SMR" id="B0R2M2"/>
<dbReference type="EnsemblBacteria" id="CAP12976">
    <property type="protein sequence ID" value="CAP12976"/>
    <property type="gene ID" value="OE_1154F"/>
</dbReference>
<dbReference type="KEGG" id="hsl:OE_1154F"/>
<dbReference type="HOGENOM" id="CLU_069533_0_0_2"/>
<dbReference type="PhylomeDB" id="B0R2M2"/>
<dbReference type="UniPathway" id="UPA00109">
    <property type="reaction ID" value="UER00184"/>
</dbReference>
<dbReference type="Proteomes" id="UP000001321">
    <property type="component" value="Chromosome"/>
</dbReference>
<dbReference type="GO" id="GO:0005737">
    <property type="term" value="C:cytoplasm"/>
    <property type="evidence" value="ECO:0007669"/>
    <property type="project" value="UniProtKB-SubCell"/>
</dbReference>
<dbReference type="GO" id="GO:0008839">
    <property type="term" value="F:4-hydroxy-tetrahydrodipicolinate reductase"/>
    <property type="evidence" value="ECO:0007669"/>
    <property type="project" value="InterPro"/>
</dbReference>
<dbReference type="GO" id="GO:0004365">
    <property type="term" value="F:glyceraldehyde-3-phosphate dehydrogenase (NAD+) (phosphorylating) activity"/>
    <property type="evidence" value="ECO:0007669"/>
    <property type="project" value="UniProtKB-UniRule"/>
</dbReference>
<dbReference type="GO" id="GO:0047100">
    <property type="term" value="F:glyceraldehyde-3-phosphate dehydrogenase (NADP+) (phosphorylating) activity"/>
    <property type="evidence" value="ECO:0007669"/>
    <property type="project" value="RHEA"/>
</dbReference>
<dbReference type="GO" id="GO:0051287">
    <property type="term" value="F:NAD binding"/>
    <property type="evidence" value="ECO:0007669"/>
    <property type="project" value="InterPro"/>
</dbReference>
<dbReference type="GO" id="GO:0050661">
    <property type="term" value="F:NADP binding"/>
    <property type="evidence" value="ECO:0007669"/>
    <property type="project" value="InterPro"/>
</dbReference>
<dbReference type="GO" id="GO:0006096">
    <property type="term" value="P:glycolytic process"/>
    <property type="evidence" value="ECO:0007669"/>
    <property type="project" value="UniProtKB-UniRule"/>
</dbReference>
<dbReference type="GO" id="GO:0009089">
    <property type="term" value="P:lysine biosynthetic process via diaminopimelate"/>
    <property type="evidence" value="ECO:0007669"/>
    <property type="project" value="InterPro"/>
</dbReference>
<dbReference type="CDD" id="cd18127">
    <property type="entry name" value="GAPDH_II_C"/>
    <property type="match status" value="1"/>
</dbReference>
<dbReference type="CDD" id="cd02278">
    <property type="entry name" value="GAPDH_II_N"/>
    <property type="match status" value="1"/>
</dbReference>
<dbReference type="Gene3D" id="3.30.360.10">
    <property type="entry name" value="Dihydrodipicolinate Reductase, domain 2"/>
    <property type="match status" value="1"/>
</dbReference>
<dbReference type="Gene3D" id="3.40.50.720">
    <property type="entry name" value="NAD(P)-binding Rossmann-like Domain"/>
    <property type="match status" value="1"/>
</dbReference>
<dbReference type="HAMAP" id="MF_00559">
    <property type="entry name" value="G3P_dehdrog_arch"/>
    <property type="match status" value="1"/>
</dbReference>
<dbReference type="InterPro" id="IPR000846">
    <property type="entry name" value="DapB_N"/>
</dbReference>
<dbReference type="InterPro" id="IPR020831">
    <property type="entry name" value="GlycerAld/Erythrose_P_DH"/>
</dbReference>
<dbReference type="InterPro" id="IPR020830">
    <property type="entry name" value="GlycerAld_3-P_DH_AS"/>
</dbReference>
<dbReference type="InterPro" id="IPR020829">
    <property type="entry name" value="GlycerAld_3-P_DH_cat"/>
</dbReference>
<dbReference type="InterPro" id="IPR020828">
    <property type="entry name" value="GlycerAld_3-P_DH_NAD(P)-bd"/>
</dbReference>
<dbReference type="InterPro" id="IPR006436">
    <property type="entry name" value="Glyceraldehyde-3-P_DH_2_arc"/>
</dbReference>
<dbReference type="InterPro" id="IPR036291">
    <property type="entry name" value="NAD(P)-bd_dom_sf"/>
</dbReference>
<dbReference type="NCBIfam" id="TIGR01546">
    <property type="entry name" value="GAPDH-II_archae"/>
    <property type="match status" value="1"/>
</dbReference>
<dbReference type="NCBIfam" id="NF003251">
    <property type="entry name" value="PRK04207.1"/>
    <property type="match status" value="1"/>
</dbReference>
<dbReference type="Pfam" id="PF01113">
    <property type="entry name" value="DapB_N"/>
    <property type="match status" value="1"/>
</dbReference>
<dbReference type="Pfam" id="PF02800">
    <property type="entry name" value="Gp_dh_C"/>
    <property type="match status" value="1"/>
</dbReference>
<dbReference type="PIRSF" id="PIRSF000149">
    <property type="entry name" value="GAP_DH"/>
    <property type="match status" value="1"/>
</dbReference>
<dbReference type="SMART" id="SM00846">
    <property type="entry name" value="Gp_dh_N"/>
    <property type="match status" value="1"/>
</dbReference>
<dbReference type="SUPFAM" id="SSF55347">
    <property type="entry name" value="Glyceraldehyde-3-phosphate dehydrogenase-like, C-terminal domain"/>
    <property type="match status" value="1"/>
</dbReference>
<dbReference type="SUPFAM" id="SSF51735">
    <property type="entry name" value="NAD(P)-binding Rossmann-fold domains"/>
    <property type="match status" value="1"/>
</dbReference>
<dbReference type="PROSITE" id="PS00071">
    <property type="entry name" value="GAPDH"/>
    <property type="match status" value="1"/>
</dbReference>
<protein>
    <recommendedName>
        <fullName evidence="1">Glyceraldehyde-3-phosphate dehydrogenase</fullName>
        <shortName evidence="1">GAPDH</shortName>
        <ecNumber evidence="1">1.2.1.59</ecNumber>
    </recommendedName>
    <alternativeName>
        <fullName evidence="1">NAD(P)-dependent glyceraldehyde-3-phosphate dehydrogenase</fullName>
    </alternativeName>
</protein>
<evidence type="ECO:0000255" key="1">
    <source>
        <dbReference type="HAMAP-Rule" id="MF_00559"/>
    </source>
</evidence>
<name>G3P_HALS3</name>
<feature type="chain" id="PRO_1000129245" description="Glyceraldehyde-3-phosphate dehydrogenase">
    <location>
        <begin position="1"/>
        <end position="335"/>
    </location>
</feature>
<feature type="active site" description="Nucleophile" evidence="1">
    <location>
        <position position="140"/>
    </location>
</feature>
<feature type="binding site" evidence="1">
    <location>
        <begin position="11"/>
        <end position="12"/>
    </location>
    <ligand>
        <name>NAD(+)</name>
        <dbReference type="ChEBI" id="CHEBI:57540"/>
    </ligand>
</feature>
<feature type="binding site" evidence="1">
    <location>
        <position position="110"/>
    </location>
    <ligand>
        <name>NAD(+)</name>
        <dbReference type="ChEBI" id="CHEBI:57540"/>
    </ligand>
</feature>
<feature type="binding site" evidence="1">
    <location>
        <begin position="139"/>
        <end position="141"/>
    </location>
    <ligand>
        <name>D-glyceraldehyde 3-phosphate</name>
        <dbReference type="ChEBI" id="CHEBI:59776"/>
    </ligand>
</feature>
<feature type="binding site" evidence="1">
    <location>
        <position position="168"/>
    </location>
    <ligand>
        <name>NAD(+)</name>
        <dbReference type="ChEBI" id="CHEBI:57540"/>
    </ligand>
</feature>
<feature type="binding site" evidence="1">
    <location>
        <begin position="194"/>
        <end position="195"/>
    </location>
    <ligand>
        <name>D-glyceraldehyde 3-phosphate</name>
        <dbReference type="ChEBI" id="CHEBI:59776"/>
    </ligand>
</feature>
<feature type="binding site" evidence="1">
    <location>
        <position position="301"/>
    </location>
    <ligand>
        <name>NAD(+)</name>
        <dbReference type="ChEBI" id="CHEBI:57540"/>
    </ligand>
</feature>
<keyword id="KW-0963">Cytoplasm</keyword>
<keyword id="KW-0324">Glycolysis</keyword>
<keyword id="KW-0520">NAD</keyword>
<keyword id="KW-0521">NADP</keyword>
<keyword id="KW-0560">Oxidoreductase</keyword>
<comment type="catalytic activity">
    <reaction evidence="1">
        <text>D-glyceraldehyde 3-phosphate + phosphate + NADP(+) = (2R)-3-phospho-glyceroyl phosphate + NADPH + H(+)</text>
        <dbReference type="Rhea" id="RHEA:10296"/>
        <dbReference type="ChEBI" id="CHEBI:15378"/>
        <dbReference type="ChEBI" id="CHEBI:43474"/>
        <dbReference type="ChEBI" id="CHEBI:57604"/>
        <dbReference type="ChEBI" id="CHEBI:57783"/>
        <dbReference type="ChEBI" id="CHEBI:58349"/>
        <dbReference type="ChEBI" id="CHEBI:59776"/>
        <dbReference type="EC" id="1.2.1.59"/>
    </reaction>
</comment>
<comment type="catalytic activity">
    <reaction evidence="1">
        <text>D-glyceraldehyde 3-phosphate + phosphate + NAD(+) = (2R)-3-phospho-glyceroyl phosphate + NADH + H(+)</text>
        <dbReference type="Rhea" id="RHEA:10300"/>
        <dbReference type="ChEBI" id="CHEBI:15378"/>
        <dbReference type="ChEBI" id="CHEBI:43474"/>
        <dbReference type="ChEBI" id="CHEBI:57540"/>
        <dbReference type="ChEBI" id="CHEBI:57604"/>
        <dbReference type="ChEBI" id="CHEBI:57945"/>
        <dbReference type="ChEBI" id="CHEBI:59776"/>
        <dbReference type="EC" id="1.2.1.59"/>
    </reaction>
</comment>
<comment type="pathway">
    <text evidence="1">Carbohydrate degradation; glycolysis; pyruvate from D-glyceraldehyde 3-phosphate: step 1/5.</text>
</comment>
<comment type="subunit">
    <text evidence="1">Homotetramer.</text>
</comment>
<comment type="subcellular location">
    <subcellularLocation>
        <location evidence="1">Cytoplasm</location>
    </subcellularLocation>
</comment>
<comment type="similarity">
    <text evidence="1">Belongs to the glyceraldehyde-3-phosphate dehydrogenase family.</text>
</comment>
<organism>
    <name type="scientific">Halobacterium salinarum (strain ATCC 29341 / DSM 671 / R1)</name>
    <dbReference type="NCBI Taxonomy" id="478009"/>
    <lineage>
        <taxon>Archaea</taxon>
        <taxon>Methanobacteriati</taxon>
        <taxon>Methanobacteriota</taxon>
        <taxon>Stenosarchaea group</taxon>
        <taxon>Halobacteria</taxon>
        <taxon>Halobacteriales</taxon>
        <taxon>Halobacteriaceae</taxon>
        <taxon>Halobacterium</taxon>
        <taxon>Halobacterium salinarum NRC-34001</taxon>
    </lineage>
</organism>
<reference key="1">
    <citation type="journal article" date="2008" name="Genomics">
        <title>Evolution in the laboratory: the genome of Halobacterium salinarum strain R1 compared to that of strain NRC-1.</title>
        <authorList>
            <person name="Pfeiffer F."/>
            <person name="Schuster S.C."/>
            <person name="Broicher A."/>
            <person name="Falb M."/>
            <person name="Palm P."/>
            <person name="Rodewald K."/>
            <person name="Ruepp A."/>
            <person name="Soppa J."/>
            <person name="Tittor J."/>
            <person name="Oesterhelt D."/>
        </authorList>
    </citation>
    <scope>NUCLEOTIDE SEQUENCE [LARGE SCALE GENOMIC DNA]</scope>
    <source>
        <strain>ATCC 29341 / DSM 671 / R1</strain>
    </source>
</reference>